<protein>
    <recommendedName>
        <fullName>Serine/threonine-protein kinase VRK3</fullName>
        <ecNumber>2.7.11.22</ecNumber>
    </recommendedName>
    <alternativeName>
        <fullName>Vaccinia-related kinase 3</fullName>
    </alternativeName>
</protein>
<gene>
    <name type="primary">Vrk3</name>
</gene>
<comment type="function">
    <text evidence="1 5 6">Plays a role in the regulation of the cell cycle by phosphorylating the nuclear envelope protein barrier-to-autointegration factor/BAF that is required for disassembly and reassembly, respectively, of the nuclear envelope during mitosis. Under normal physiological conditions, negatively regulates ERK activity along with VHR phosphatase in the nucleus, causing timely and transient action of ERK. Stress conditions activate CDK5 which phosphorylates VRK3 to increase VHR phosphatase activity and suppress prolonged ERK activation that causes cell death. For example, upon glutamate induction, promotes nuclear localization of HSP70/HSPA1A to inhibit ERK activation via VHR phosphatase.</text>
</comment>
<comment type="catalytic activity">
    <reaction evidence="1">
        <text>L-seryl-[protein] + ATP = O-phospho-L-seryl-[protein] + ADP + H(+)</text>
        <dbReference type="Rhea" id="RHEA:17989"/>
        <dbReference type="Rhea" id="RHEA-COMP:9863"/>
        <dbReference type="Rhea" id="RHEA-COMP:11604"/>
        <dbReference type="ChEBI" id="CHEBI:15378"/>
        <dbReference type="ChEBI" id="CHEBI:29999"/>
        <dbReference type="ChEBI" id="CHEBI:30616"/>
        <dbReference type="ChEBI" id="CHEBI:83421"/>
        <dbReference type="ChEBI" id="CHEBI:456216"/>
        <dbReference type="EC" id="2.7.11.22"/>
    </reaction>
</comment>
<comment type="subunit">
    <text evidence="1 6">Interacts with DUSP3 (PubMed:16845380). Interacts with RAN (By similarity). Interacts with HSP70/HSPA1A (By similarity).</text>
</comment>
<comment type="subcellular location">
    <subcellularLocation>
        <location evidence="5">Nucleus</location>
    </subcellularLocation>
    <subcellularLocation>
        <location evidence="1">Cytoplasm</location>
    </subcellularLocation>
    <text evidence="1">Under oxidative stress, migrates from the nucleus to the cytoplasm.</text>
</comment>
<comment type="tissue specificity">
    <text evidence="4">Expressed in liver, kidney, muscle, thymus, and bone marrow. Weakly expressed in spleen.</text>
</comment>
<comment type="developmental stage">
    <text evidence="4">Weakly expressed in embryo compared to VRK1 and VRK3. Expressed from 10.5 dpc to 13.5 dpc in developing liver and then decreases. It increases again from 17.5 dpc and remains thereafter. Highly expressed in hematopoietic embryonic tissues from 10.5 dpc to 14.5 dpc. Strongly expressed in the yolk-sac.</text>
</comment>
<comment type="PTM">
    <text evidence="1">Phosphorylated at Ser-108 by CDK5; leading to protection of the cell against H2O2-induced apoptosis.</text>
</comment>
<comment type="PTM">
    <text evidence="1">Ubiquitinated by RNF144A.</text>
</comment>
<comment type="similarity">
    <text evidence="7">Belongs to the protein kinase superfamily. CK1 Ser/Thr protein kinase family. VRK subfamily.</text>
</comment>
<comment type="caution">
    <text evidence="7">Inactive as a kinase due to its inability to bind ATP.</text>
</comment>
<sequence length="453" mass="50830">MISFCPVCGKSVKVSFKFCPYCGKALPVEEDGGTQSAVTPHVSSVPGSRRDLNSSFETSPKKVKCSHTVTSLPLSRHSDCDSSGSDNTLTSPDRATGTRSRPLTPKGSPLSNRQSPQTLKRTRVTTSLQALATGTELTDQNGKHWTLGALQIRDDQGILYEAEPTSAVPSESRTQKWRFSLKLDSKDGRLFNEQNFFQRVAKPLQVNKWKKQFLLPLLAIPTCIGFGIHQDKYRFLVFPSLGRSLQSALDDNPKHVVSERCVLQVACRLLDALEYLHENEYVHGNLTAENVFVNPEDLSQVTLVGYGFTYRYCPGGKHVAYKEGSRSPHDGDLEFISMDLHKGCGPSRRSDLQTLGYCMLKWLYGSLPWTNCLPNTEKITRQKQKYLDSPERLVGLCGRWNKASETLREYLKVVMALNYEEKPPYATLRNSLEALLQDMRVSPYDPLDLQMVP</sequence>
<name>VRK3_MOUSE</name>
<proteinExistence type="evidence at protein level"/>
<accession>Q8K3G5</accession>
<accession>Q921W6</accession>
<dbReference type="EC" id="2.7.11.22"/>
<dbReference type="EMBL" id="AY115107">
    <property type="protein sequence ID" value="AAM74471.1"/>
    <property type="molecule type" value="Genomic_DNA"/>
</dbReference>
<dbReference type="EMBL" id="BC010473">
    <property type="protein sequence ID" value="AAH10473.1"/>
    <property type="molecule type" value="mRNA"/>
</dbReference>
<dbReference type="EMBL" id="BC024782">
    <property type="protein sequence ID" value="AAH24782.1"/>
    <property type="molecule type" value="mRNA"/>
</dbReference>
<dbReference type="EMBL" id="BC024839">
    <property type="protein sequence ID" value="AAH24839.1"/>
    <property type="molecule type" value="mRNA"/>
</dbReference>
<dbReference type="EMBL" id="BC034196">
    <property type="protein sequence ID" value="AAH34196.1"/>
    <property type="molecule type" value="mRNA"/>
</dbReference>
<dbReference type="CCDS" id="CCDS21214.1"/>
<dbReference type="RefSeq" id="NP_001406086.1">
    <property type="nucleotide sequence ID" value="NM_001419157.1"/>
</dbReference>
<dbReference type="RefSeq" id="NP_001406087.1">
    <property type="nucleotide sequence ID" value="NM_001419158.1"/>
</dbReference>
<dbReference type="RefSeq" id="NP_001406088.1">
    <property type="nucleotide sequence ID" value="NM_001419159.1"/>
</dbReference>
<dbReference type="RefSeq" id="NP_598706.1">
    <property type="nucleotide sequence ID" value="NM_133945.2"/>
</dbReference>
<dbReference type="RefSeq" id="XP_006540601.1">
    <property type="nucleotide sequence ID" value="XM_006540538.3"/>
</dbReference>
<dbReference type="SMR" id="Q8K3G5"/>
<dbReference type="BioGRID" id="221691">
    <property type="interactions" value="3"/>
</dbReference>
<dbReference type="FunCoup" id="Q8K3G5">
    <property type="interactions" value="3988"/>
</dbReference>
<dbReference type="IntAct" id="Q8K3G5">
    <property type="interactions" value="1"/>
</dbReference>
<dbReference type="STRING" id="10090.ENSMUSP00000002275"/>
<dbReference type="iPTMnet" id="Q8K3G5"/>
<dbReference type="PhosphoSitePlus" id="Q8K3G5"/>
<dbReference type="jPOST" id="Q8K3G5"/>
<dbReference type="PaxDb" id="10090-ENSMUSP00000002275"/>
<dbReference type="ProteomicsDB" id="275190"/>
<dbReference type="Pumba" id="Q8K3G5"/>
<dbReference type="Antibodypedia" id="18806">
    <property type="antibodies" value="97 antibodies from 26 providers"/>
</dbReference>
<dbReference type="DNASU" id="101568"/>
<dbReference type="Ensembl" id="ENSMUST00000002275.15">
    <property type="protein sequence ID" value="ENSMUSP00000002275.9"/>
    <property type="gene ID" value="ENSMUSG00000002205.17"/>
</dbReference>
<dbReference type="GeneID" id="101568"/>
<dbReference type="KEGG" id="mmu:101568"/>
<dbReference type="UCSC" id="uc009gqr.1">
    <property type="organism name" value="mouse"/>
</dbReference>
<dbReference type="AGR" id="MGI:2182465"/>
<dbReference type="CTD" id="51231"/>
<dbReference type="MGI" id="MGI:2182465">
    <property type="gene designation" value="Vrk3"/>
</dbReference>
<dbReference type="VEuPathDB" id="HostDB:ENSMUSG00000002205"/>
<dbReference type="eggNOG" id="KOG1164">
    <property type="taxonomic scope" value="Eukaryota"/>
</dbReference>
<dbReference type="GeneTree" id="ENSGT00940000158111"/>
<dbReference type="HOGENOM" id="CLU_019279_4_4_1"/>
<dbReference type="InParanoid" id="Q8K3G5"/>
<dbReference type="OMA" id="VMTLEYE"/>
<dbReference type="OrthoDB" id="2687620at2759"/>
<dbReference type="PhylomeDB" id="Q8K3G5"/>
<dbReference type="TreeFam" id="TF106473"/>
<dbReference type="Reactome" id="R-MMU-202670">
    <property type="pathway name" value="ERKs are inactivated"/>
</dbReference>
<dbReference type="BioGRID-ORCS" id="101568">
    <property type="hits" value="4 hits in 79 CRISPR screens"/>
</dbReference>
<dbReference type="PRO" id="PR:Q8K3G5"/>
<dbReference type="Proteomes" id="UP000000589">
    <property type="component" value="Chromosome 7"/>
</dbReference>
<dbReference type="RNAct" id="Q8K3G5">
    <property type="molecule type" value="protein"/>
</dbReference>
<dbReference type="Bgee" id="ENSMUSG00000002205">
    <property type="expression patterns" value="Expressed in seminiferous tubule of testis and 262 other cell types or tissues"/>
</dbReference>
<dbReference type="ExpressionAtlas" id="Q8K3G5">
    <property type="expression patterns" value="baseline and differential"/>
</dbReference>
<dbReference type="GO" id="GO:0005737">
    <property type="term" value="C:cytoplasm"/>
    <property type="evidence" value="ECO:0007669"/>
    <property type="project" value="UniProtKB-SubCell"/>
</dbReference>
<dbReference type="GO" id="GO:0005654">
    <property type="term" value="C:nucleoplasm"/>
    <property type="evidence" value="ECO:0007669"/>
    <property type="project" value="Ensembl"/>
</dbReference>
<dbReference type="GO" id="GO:0005634">
    <property type="term" value="C:nucleus"/>
    <property type="evidence" value="ECO:0000314"/>
    <property type="project" value="MGI"/>
</dbReference>
<dbReference type="GO" id="GO:0005524">
    <property type="term" value="F:ATP binding"/>
    <property type="evidence" value="ECO:0007669"/>
    <property type="project" value="InterPro"/>
</dbReference>
<dbReference type="GO" id="GO:0004672">
    <property type="term" value="F:protein kinase activity"/>
    <property type="evidence" value="ECO:0007669"/>
    <property type="project" value="InterPro"/>
</dbReference>
<dbReference type="GO" id="GO:0072542">
    <property type="term" value="F:protein phosphatase activator activity"/>
    <property type="evidence" value="ECO:0000353"/>
    <property type="project" value="MGI"/>
</dbReference>
<dbReference type="GO" id="GO:0019903">
    <property type="term" value="F:protein phosphatase binding"/>
    <property type="evidence" value="ECO:0000353"/>
    <property type="project" value="MGI"/>
</dbReference>
<dbReference type="GO" id="GO:0070373">
    <property type="term" value="P:negative regulation of ERK1 and ERK2 cascade"/>
    <property type="evidence" value="ECO:0000314"/>
    <property type="project" value="MGI"/>
</dbReference>
<dbReference type="GO" id="GO:0007519">
    <property type="term" value="P:skeletal muscle tissue development"/>
    <property type="evidence" value="ECO:0007669"/>
    <property type="project" value="Ensembl"/>
</dbReference>
<dbReference type="FunFam" id="1.10.510.10:FF:000516">
    <property type="entry name" value="VRK serine/threonine kinase 3"/>
    <property type="match status" value="1"/>
</dbReference>
<dbReference type="Gene3D" id="1.10.510.10">
    <property type="entry name" value="Transferase(Phosphotransferase) domain 1"/>
    <property type="match status" value="1"/>
</dbReference>
<dbReference type="InterPro" id="IPR050235">
    <property type="entry name" value="CK1_Ser-Thr_kinase"/>
</dbReference>
<dbReference type="InterPro" id="IPR011009">
    <property type="entry name" value="Kinase-like_dom_sf"/>
</dbReference>
<dbReference type="InterPro" id="IPR000719">
    <property type="entry name" value="Prot_kinase_dom"/>
</dbReference>
<dbReference type="InterPro" id="IPR026870">
    <property type="entry name" value="Zinc_ribbon_dom"/>
</dbReference>
<dbReference type="PANTHER" id="PTHR11909">
    <property type="entry name" value="CASEIN KINASE-RELATED"/>
    <property type="match status" value="1"/>
</dbReference>
<dbReference type="Pfam" id="PF00069">
    <property type="entry name" value="Pkinase"/>
    <property type="match status" value="1"/>
</dbReference>
<dbReference type="Pfam" id="PF13240">
    <property type="entry name" value="Zn_Ribbon_1"/>
    <property type="match status" value="1"/>
</dbReference>
<dbReference type="SMART" id="SM00220">
    <property type="entry name" value="S_TKc"/>
    <property type="match status" value="1"/>
</dbReference>
<dbReference type="SUPFAM" id="SSF56112">
    <property type="entry name" value="Protein kinase-like (PK-like)"/>
    <property type="match status" value="1"/>
</dbReference>
<dbReference type="PROSITE" id="PS50011">
    <property type="entry name" value="PROTEIN_KINASE_DOM"/>
    <property type="match status" value="1"/>
</dbReference>
<evidence type="ECO:0000250" key="1">
    <source>
        <dbReference type="UniProtKB" id="Q8IV63"/>
    </source>
</evidence>
<evidence type="ECO:0000255" key="2">
    <source>
        <dbReference type="PROSITE-ProRule" id="PRU00159"/>
    </source>
</evidence>
<evidence type="ECO:0000256" key="3">
    <source>
        <dbReference type="SAM" id="MobiDB-lite"/>
    </source>
</evidence>
<evidence type="ECO:0000269" key="4">
    <source>
    </source>
</evidence>
<evidence type="ECO:0000269" key="5">
    <source>
    </source>
</evidence>
<evidence type="ECO:0000269" key="6">
    <source>
    </source>
</evidence>
<evidence type="ECO:0000305" key="7"/>
<evidence type="ECO:0007744" key="8">
    <source>
    </source>
</evidence>
<evidence type="ECO:0007744" key="9">
    <source>
    </source>
</evidence>
<organism>
    <name type="scientific">Mus musculus</name>
    <name type="common">Mouse</name>
    <dbReference type="NCBI Taxonomy" id="10090"/>
    <lineage>
        <taxon>Eukaryota</taxon>
        <taxon>Metazoa</taxon>
        <taxon>Chordata</taxon>
        <taxon>Craniata</taxon>
        <taxon>Vertebrata</taxon>
        <taxon>Euteleostomi</taxon>
        <taxon>Mammalia</taxon>
        <taxon>Eutheria</taxon>
        <taxon>Euarchontoglires</taxon>
        <taxon>Glires</taxon>
        <taxon>Rodentia</taxon>
        <taxon>Myomorpha</taxon>
        <taxon>Muroidea</taxon>
        <taxon>Muridae</taxon>
        <taxon>Murinae</taxon>
        <taxon>Mus</taxon>
        <taxon>Mus</taxon>
    </lineage>
</organism>
<keyword id="KW-0963">Cytoplasm</keyword>
<keyword id="KW-0547">Nucleotide-binding</keyword>
<keyword id="KW-0539">Nucleus</keyword>
<keyword id="KW-0597">Phosphoprotein</keyword>
<keyword id="KW-1185">Reference proteome</keyword>
<keyword id="KW-0808">Transferase</keyword>
<keyword id="KW-0832">Ubl conjugation</keyword>
<reference key="1">
    <citation type="journal article" date="2002" name="J. Biol. Chem.">
        <title>Cloning and characterization of human Siglec-11. A recently evolved signaling molecule that can interact with SHP-1 and SHP-2 and is expressed by tissue macrophages, including brain microglia.</title>
        <authorList>
            <person name="Angata T."/>
            <person name="Kerr S.C."/>
            <person name="Greaves D.R."/>
            <person name="Varki N.M."/>
            <person name="Crocker P.R."/>
            <person name="Varki A."/>
        </authorList>
    </citation>
    <scope>NUCLEOTIDE SEQUENCE</scope>
</reference>
<reference key="2">
    <citation type="journal article" date="2004" name="Genome Res.">
        <title>The status, quality, and expansion of the NIH full-length cDNA project: the Mammalian Gene Collection (MGC).</title>
        <authorList>
            <consortium name="The MGC Project Team"/>
        </authorList>
    </citation>
    <scope>NUCLEOTIDE SEQUENCE [LARGE SCALE MRNA]</scope>
    <source>
        <tissue>Colon</tissue>
        <tissue>Liver</tissue>
        <tissue>Mammary tumor</tissue>
    </source>
</reference>
<reference key="3">
    <citation type="journal article" date="2003" name="FEBS Lett.">
        <title>Expression of the VRK (vaccinia-related kinase) gene family of p53 regulators in murine hematopoietic development.</title>
        <authorList>
            <person name="Vega F.M."/>
            <person name="Gonzalo P."/>
            <person name="Gaspar M.L."/>
            <person name="Lazo P.A."/>
        </authorList>
    </citation>
    <scope>TISSUE SPECIFICITY</scope>
    <scope>DEVELOPMENTAL STAGE</scope>
</reference>
<reference key="4">
    <citation type="journal article" date="2004" name="J. Biol. Chem.">
        <title>Characterization of three paralogous members of the Mammalian vaccinia related kinase family.</title>
        <authorList>
            <person name="Nichols R.J."/>
            <person name="Traktman P."/>
        </authorList>
    </citation>
    <scope>FUNCTION</scope>
    <scope>SUBCELLULAR LOCATION</scope>
    <scope>NUCLEAR LOCALIZATION SIGNAL</scope>
</reference>
<reference key="5">
    <citation type="journal article" date="2006" name="Nat. Cell Biol.">
        <title>Negative regulation of ERK activity by VRK3-mediated activation of VHR phosphatase.</title>
        <authorList>
            <person name="Kang T.H."/>
            <person name="Kim K.T."/>
        </authorList>
    </citation>
    <scope>FUNCTION</scope>
    <scope>INTERACTION WITH DUSP3</scope>
    <scope>MUTAGENESIS OF LYS-182</scope>
    <scope>AUTO-PHOSPHORYLATION</scope>
</reference>
<reference key="6">
    <citation type="journal article" date="2007" name="Proc. Natl. Acad. Sci. U.S.A.">
        <title>Large-scale phosphorylation analysis of mouse liver.</title>
        <authorList>
            <person name="Villen J."/>
            <person name="Beausoleil S.A."/>
            <person name="Gerber S.A."/>
            <person name="Gygi S.P."/>
        </authorList>
    </citation>
    <scope>PHOSPHORYLATION [LARGE SCALE ANALYSIS] AT SER-59</scope>
    <scope>IDENTIFICATION BY MASS SPECTROMETRY [LARGE SCALE ANALYSIS]</scope>
    <source>
        <tissue>Liver</tissue>
    </source>
</reference>
<reference key="7">
    <citation type="journal article" date="2010" name="Cell">
        <title>A tissue-specific atlas of mouse protein phosphorylation and expression.</title>
        <authorList>
            <person name="Huttlin E.L."/>
            <person name="Jedrychowski M.P."/>
            <person name="Elias J.E."/>
            <person name="Goswami T."/>
            <person name="Rad R."/>
            <person name="Beausoleil S.A."/>
            <person name="Villen J."/>
            <person name="Haas W."/>
            <person name="Sowa M.E."/>
            <person name="Gygi S.P."/>
        </authorList>
    </citation>
    <scope>PHOSPHORYLATION [LARGE SCALE ANALYSIS] AT SER-59</scope>
    <scope>IDENTIFICATION BY MASS SPECTROMETRY [LARGE SCALE ANALYSIS]</scope>
    <source>
        <tissue>Lung</tissue>
        <tissue>Testis</tissue>
    </source>
</reference>
<feature type="chain" id="PRO_0000086809" description="Serine/threonine-protein kinase VRK3">
    <location>
        <begin position="1"/>
        <end position="453"/>
    </location>
</feature>
<feature type="domain" description="Protein kinase" evidence="2">
    <location>
        <begin position="125"/>
        <end position="436"/>
    </location>
</feature>
<feature type="region of interest" description="Disordered" evidence="3">
    <location>
        <begin position="30"/>
        <end position="123"/>
    </location>
</feature>
<feature type="short sequence motif" description="Nuclear localization signal" evidence="5">
    <location>
        <begin position="49"/>
        <end position="64"/>
    </location>
</feature>
<feature type="compositionally biased region" description="Polar residues" evidence="3">
    <location>
        <begin position="33"/>
        <end position="46"/>
    </location>
</feature>
<feature type="compositionally biased region" description="Polar residues" evidence="3">
    <location>
        <begin position="81"/>
        <end position="101"/>
    </location>
</feature>
<feature type="compositionally biased region" description="Polar residues" evidence="3">
    <location>
        <begin position="109"/>
        <end position="123"/>
    </location>
</feature>
<feature type="modified residue" description="Phosphoserine" evidence="1">
    <location>
        <position position="54"/>
    </location>
</feature>
<feature type="modified residue" description="Phosphoserine" evidence="1">
    <location>
        <position position="55"/>
    </location>
</feature>
<feature type="modified residue" description="Phosphoserine" evidence="8 9">
    <location>
        <position position="59"/>
    </location>
</feature>
<feature type="modified residue" description="Phosphoserine" evidence="1">
    <location>
        <position position="82"/>
    </location>
</feature>
<feature type="modified residue" description="Phosphoserine" evidence="1">
    <location>
        <position position="83"/>
    </location>
</feature>
<feature type="modified residue" description="Phosphoserine" evidence="1">
    <location>
        <position position="108"/>
    </location>
</feature>
<feature type="mutagenesis site" description="Loss of auto-phosphorylation activity." evidence="6">
    <original>K</original>
    <variation>E</variation>
    <location>
        <position position="182"/>
    </location>
</feature>
<feature type="sequence conflict" description="In Ref. 1; AAM74471." evidence="7" ref="1">
    <original>S</original>
    <variation>P</variation>
    <location>
        <position position="44"/>
    </location>
</feature>
<feature type="sequence conflict" description="In Ref. 1; AAM74471." evidence="7" ref="1">
    <original>V</original>
    <variation>I</variation>
    <location>
        <position position="168"/>
    </location>
</feature>